<keyword id="KW-1185">Reference proteome</keyword>
<evidence type="ECO:0000255" key="1">
    <source>
        <dbReference type="HAMAP-Rule" id="MF_01560"/>
    </source>
</evidence>
<comment type="similarity">
    <text evidence="1">Belongs to the UPF0358 family.</text>
</comment>
<protein>
    <recommendedName>
        <fullName evidence="1">UPF0358 protein ABC2396</fullName>
    </recommendedName>
</protein>
<accession>Q5WFC9</accession>
<feature type="chain" id="PRO_0000110639" description="UPF0358 protein ABC2396">
    <location>
        <begin position="1"/>
        <end position="93"/>
    </location>
</feature>
<dbReference type="EMBL" id="AP006627">
    <property type="protein sequence ID" value="BAD64931.1"/>
    <property type="molecule type" value="Genomic_DNA"/>
</dbReference>
<dbReference type="RefSeq" id="WP_011247239.1">
    <property type="nucleotide sequence ID" value="NC_006582.1"/>
</dbReference>
<dbReference type="SMR" id="Q5WFC9"/>
<dbReference type="STRING" id="66692.ABC2396"/>
<dbReference type="KEGG" id="bcl:ABC2396"/>
<dbReference type="eggNOG" id="COG4838">
    <property type="taxonomic scope" value="Bacteria"/>
</dbReference>
<dbReference type="HOGENOM" id="CLU_160493_1_0_9"/>
<dbReference type="OrthoDB" id="2135235at2"/>
<dbReference type="Proteomes" id="UP000001168">
    <property type="component" value="Chromosome"/>
</dbReference>
<dbReference type="Gene3D" id="1.10.287.750">
    <property type="entry name" value="SO2669-like"/>
    <property type="match status" value="1"/>
</dbReference>
<dbReference type="HAMAP" id="MF_01560">
    <property type="entry name" value="UPF0358"/>
    <property type="match status" value="1"/>
</dbReference>
<dbReference type="InterPro" id="IPR009983">
    <property type="entry name" value="UPF0358"/>
</dbReference>
<dbReference type="InterPro" id="IPR036270">
    <property type="entry name" value="UPF0358_sf"/>
</dbReference>
<dbReference type="NCBIfam" id="NF010187">
    <property type="entry name" value="PRK13666.1"/>
    <property type="match status" value="1"/>
</dbReference>
<dbReference type="Pfam" id="PF07408">
    <property type="entry name" value="DUF1507"/>
    <property type="match status" value="1"/>
</dbReference>
<dbReference type="SUPFAM" id="SSF140404">
    <property type="entry name" value="EF2458-like"/>
    <property type="match status" value="1"/>
</dbReference>
<name>Y2396_SHOC1</name>
<gene>
    <name type="ordered locus">ABC2396</name>
</gene>
<sequence>MTTNAVTSQSEKAYALLQADAEKIQKLIEVQLENLTMPQCPLYEEVLDTRMFGLSREIDFAIRLELVEEEKGKMILSELERKLALLHEASMRK</sequence>
<proteinExistence type="inferred from homology"/>
<reference key="1">
    <citation type="submission" date="2003-10" db="EMBL/GenBank/DDBJ databases">
        <title>The complete genome sequence of the alkaliphilic Bacillus clausii KSM-K16.</title>
        <authorList>
            <person name="Takaki Y."/>
            <person name="Kageyama Y."/>
            <person name="Shimamura S."/>
            <person name="Suzuki H."/>
            <person name="Nishi S."/>
            <person name="Hatada Y."/>
            <person name="Kawai S."/>
            <person name="Ito S."/>
            <person name="Horikoshi K."/>
        </authorList>
    </citation>
    <scope>NUCLEOTIDE SEQUENCE [LARGE SCALE GENOMIC DNA]</scope>
    <source>
        <strain>KSM-K16</strain>
    </source>
</reference>
<organism>
    <name type="scientific">Shouchella clausii (strain KSM-K16)</name>
    <name type="common">Alkalihalobacillus clausii</name>
    <dbReference type="NCBI Taxonomy" id="66692"/>
    <lineage>
        <taxon>Bacteria</taxon>
        <taxon>Bacillati</taxon>
        <taxon>Bacillota</taxon>
        <taxon>Bacilli</taxon>
        <taxon>Bacillales</taxon>
        <taxon>Bacillaceae</taxon>
        <taxon>Shouchella</taxon>
    </lineage>
</organism>